<sequence length="97" mass="10671">MAKMSALSIFAIFIILVLVIFEIPEIEAHDSECLKEYGGDVGFGFCAPKIFPTICYRNCQKDKGANGGKCLWGEGGKVKCLCDFCSNESFNQFISLT</sequence>
<name>DF196_ARATH</name>
<dbReference type="EMBL" id="AJ632250">
    <property type="protein sequence ID" value="CAG15158.1"/>
    <property type="molecule type" value="Genomic_DNA"/>
</dbReference>
<dbReference type="EMBL" id="AJ632252">
    <property type="protein sequence ID" value="CAG15168.1"/>
    <property type="molecule type" value="Genomic_DNA"/>
</dbReference>
<dbReference type="EMBL" id="AJ632253">
    <property type="protein sequence ID" value="CAG15173.1"/>
    <property type="molecule type" value="Genomic_DNA"/>
</dbReference>
<dbReference type="EMBL" id="AJ632254">
    <property type="protein sequence ID" value="CAG15178.1"/>
    <property type="molecule type" value="Genomic_DNA"/>
</dbReference>
<dbReference type="EMBL" id="AJ632255">
    <property type="protein sequence ID" value="CAG15184.1"/>
    <property type="molecule type" value="Genomic_DNA"/>
</dbReference>
<dbReference type="EMBL" id="AJ632256">
    <property type="protein sequence ID" value="CAG15190.1"/>
    <property type="molecule type" value="Genomic_DNA"/>
</dbReference>
<dbReference type="EMBL" id="AJ632257">
    <property type="protein sequence ID" value="CAG15196.1"/>
    <property type="molecule type" value="Genomic_DNA"/>
</dbReference>
<dbReference type="EMBL" id="AJ632258">
    <property type="protein sequence ID" value="CAG15201.1"/>
    <property type="molecule type" value="Genomic_DNA"/>
</dbReference>
<dbReference type="EMBL" id="AJ632259">
    <property type="protein sequence ID" value="CAG15206.1"/>
    <property type="molecule type" value="Genomic_DNA"/>
</dbReference>
<dbReference type="EMBL" id="AJ632260">
    <property type="protein sequence ID" value="CAG15211.1"/>
    <property type="molecule type" value="Genomic_DNA"/>
</dbReference>
<dbReference type="EMBL" id="AJ632261">
    <property type="protein sequence ID" value="CAG15216.1"/>
    <property type="molecule type" value="Genomic_DNA"/>
</dbReference>
<dbReference type="EMBL" id="AJ632262">
    <property type="protein sequence ID" value="CAG15221.1"/>
    <property type="molecule type" value="Genomic_DNA"/>
</dbReference>
<dbReference type="EMBL" id="AJ632263">
    <property type="protein sequence ID" value="CAG15226.1"/>
    <property type="molecule type" value="Genomic_DNA"/>
</dbReference>
<dbReference type="EMBL" id="AJ632264">
    <property type="protein sequence ID" value="CAG15231.1"/>
    <property type="molecule type" value="Genomic_DNA"/>
</dbReference>
<dbReference type="EMBL" id="AJ632265">
    <property type="protein sequence ID" value="CAG15236.1"/>
    <property type="molecule type" value="Genomic_DNA"/>
</dbReference>
<dbReference type="EMBL" id="AJ632266">
    <property type="protein sequence ID" value="CAG15241.1"/>
    <property type="molecule type" value="Genomic_DNA"/>
</dbReference>
<dbReference type="EMBL" id="AC002335">
    <property type="protein sequence ID" value="AAM14812.1"/>
    <property type="molecule type" value="Genomic_DNA"/>
</dbReference>
<dbReference type="EMBL" id="CP002685">
    <property type="protein sequence ID" value="AEC10287.1"/>
    <property type="molecule type" value="Genomic_DNA"/>
</dbReference>
<dbReference type="EMBL" id="BT009648">
    <property type="protein sequence ID" value="AAP75798.1"/>
    <property type="molecule type" value="mRNA"/>
</dbReference>
<dbReference type="EMBL" id="AK228120">
    <property type="protein sequence ID" value="BAF00078.1"/>
    <property type="molecule type" value="mRNA"/>
</dbReference>
<dbReference type="EMBL" id="AY088677">
    <property type="protein sequence ID" value="AAM66999.1"/>
    <property type="molecule type" value="mRNA"/>
</dbReference>
<dbReference type="RefSeq" id="NP_566000.1">
    <property type="nucleotide sequence ID" value="NM_129915.4"/>
</dbReference>
<dbReference type="SMR" id="Q8RYE7"/>
<dbReference type="FunCoup" id="Q8RYE7">
    <property type="interactions" value="3"/>
</dbReference>
<dbReference type="STRING" id="3702.Q8RYE7"/>
<dbReference type="MEROPS" id="I18.001"/>
<dbReference type="MEROPS" id="I18.002"/>
<dbReference type="PaxDb" id="3702-AT2G43535.1"/>
<dbReference type="ProteomicsDB" id="224626"/>
<dbReference type="EnsemblPlants" id="AT2G43535.1">
    <property type="protein sequence ID" value="AT2G43535.1"/>
    <property type="gene ID" value="AT2G43535"/>
</dbReference>
<dbReference type="GeneID" id="818955"/>
<dbReference type="Gramene" id="AT2G43535.1">
    <property type="protein sequence ID" value="AT2G43535.1"/>
    <property type="gene ID" value="AT2G43535"/>
</dbReference>
<dbReference type="KEGG" id="ath:AT2G43535"/>
<dbReference type="Araport" id="AT2G43535"/>
<dbReference type="TAIR" id="AT2G43535"/>
<dbReference type="HOGENOM" id="CLU_181760_0_0_1"/>
<dbReference type="InParanoid" id="Q8RYE7"/>
<dbReference type="OMA" id="CRHESGQ"/>
<dbReference type="PhylomeDB" id="Q8RYE7"/>
<dbReference type="PRO" id="PR:Q8RYE7"/>
<dbReference type="Proteomes" id="UP000006548">
    <property type="component" value="Chromosome 2"/>
</dbReference>
<dbReference type="ExpressionAtlas" id="Q8RYE7">
    <property type="expression patterns" value="baseline and differential"/>
</dbReference>
<dbReference type="GO" id="GO:0005576">
    <property type="term" value="C:extracellular region"/>
    <property type="evidence" value="ECO:0007669"/>
    <property type="project" value="UniProtKB-SubCell"/>
</dbReference>
<dbReference type="GO" id="GO:0099503">
    <property type="term" value="C:secretory vesicle"/>
    <property type="evidence" value="ECO:0007005"/>
    <property type="project" value="TAIR"/>
</dbReference>
<dbReference type="GO" id="GO:0019871">
    <property type="term" value="F:sodium channel inhibitor activity"/>
    <property type="evidence" value="ECO:0007669"/>
    <property type="project" value="InterPro"/>
</dbReference>
<dbReference type="GO" id="GO:0050832">
    <property type="term" value="P:defense response to fungus"/>
    <property type="evidence" value="ECO:0007669"/>
    <property type="project" value="UniProtKB-KW"/>
</dbReference>
<dbReference type="GO" id="GO:0031640">
    <property type="term" value="P:killing of cells of another organism"/>
    <property type="evidence" value="ECO:0007669"/>
    <property type="project" value="UniProtKB-KW"/>
</dbReference>
<dbReference type="Gene3D" id="3.30.30.10">
    <property type="entry name" value="Knottin, scorpion toxin-like"/>
    <property type="match status" value="1"/>
</dbReference>
<dbReference type="InterPro" id="IPR003614">
    <property type="entry name" value="Scorpion_toxin-like"/>
</dbReference>
<dbReference type="InterPro" id="IPR036574">
    <property type="entry name" value="Scorpion_toxin-like_sf"/>
</dbReference>
<dbReference type="InterPro" id="IPR002061">
    <property type="entry name" value="Scorpion_toxinL/defensin"/>
</dbReference>
<dbReference type="Pfam" id="PF00537">
    <property type="entry name" value="Toxin_3"/>
    <property type="match status" value="1"/>
</dbReference>
<dbReference type="SMART" id="SM00505">
    <property type="entry name" value="Knot1"/>
    <property type="match status" value="1"/>
</dbReference>
<dbReference type="SUPFAM" id="SSF57095">
    <property type="entry name" value="Scorpion toxin-like"/>
    <property type="match status" value="1"/>
</dbReference>
<reference key="1">
    <citation type="journal article" date="2004" name="Genetics">
        <title>Functional divergence in tandemly duplicated Arabidopsis thaliana trypsin inhibitor genes.</title>
        <authorList>
            <person name="Clauss M.J."/>
            <person name="Mitchell-Olds T."/>
        </authorList>
    </citation>
    <scope>NUCLEOTIDE SEQUENCE [GENOMIC DNA]</scope>
    <scope>GENE FAMILY</scope>
    <scope>NOMENCLATURE</scope>
    <source>
        <strain>cv. Col-1</strain>
        <strain>cv. Cvi-1</strain>
        <strain>cv. Di-0</strain>
        <strain>cv. Fe-1a</strain>
        <strain>cv. Goe-0</strain>
        <strain>cv. Ita-0</strain>
        <strain>cv. Kas-1</strain>
        <strain>cv. Landsberg erecta</strain>
        <strain>cv. Le-0</strain>
        <strain>cv. Nd-1</strain>
        <strain>cv. Nok-0</strain>
        <strain>cv. Rsch-0</strain>
        <strain>cv. Ta-0</strain>
        <strain>cv. Wassilewskija</strain>
        <strain>cv. Wei-0</strain>
        <strain>cv. Wil-2</strain>
        <tissue>Leaf</tissue>
    </source>
</reference>
<reference key="2">
    <citation type="journal article" date="1999" name="Nature">
        <title>Sequence and analysis of chromosome 2 of the plant Arabidopsis thaliana.</title>
        <authorList>
            <person name="Lin X."/>
            <person name="Kaul S."/>
            <person name="Rounsley S.D."/>
            <person name="Shea T.P."/>
            <person name="Benito M.-I."/>
            <person name="Town C.D."/>
            <person name="Fujii C.Y."/>
            <person name="Mason T.M."/>
            <person name="Bowman C.L."/>
            <person name="Barnstead M.E."/>
            <person name="Feldblyum T.V."/>
            <person name="Buell C.R."/>
            <person name="Ketchum K.A."/>
            <person name="Lee J.J."/>
            <person name="Ronning C.M."/>
            <person name="Koo H.L."/>
            <person name="Moffat K.S."/>
            <person name="Cronin L.A."/>
            <person name="Shen M."/>
            <person name="Pai G."/>
            <person name="Van Aken S."/>
            <person name="Umayam L."/>
            <person name="Tallon L.J."/>
            <person name="Gill J.E."/>
            <person name="Adams M.D."/>
            <person name="Carrera A.J."/>
            <person name="Creasy T.H."/>
            <person name="Goodman H.M."/>
            <person name="Somerville C.R."/>
            <person name="Copenhaver G.P."/>
            <person name="Preuss D."/>
            <person name="Nierman W.C."/>
            <person name="White O."/>
            <person name="Eisen J.A."/>
            <person name="Salzberg S.L."/>
            <person name="Fraser C.M."/>
            <person name="Venter J.C."/>
        </authorList>
    </citation>
    <scope>NUCLEOTIDE SEQUENCE [LARGE SCALE GENOMIC DNA]</scope>
    <source>
        <strain>cv. Columbia</strain>
    </source>
</reference>
<reference key="3">
    <citation type="journal article" date="2017" name="Plant J.">
        <title>Araport11: a complete reannotation of the Arabidopsis thaliana reference genome.</title>
        <authorList>
            <person name="Cheng C.Y."/>
            <person name="Krishnakumar V."/>
            <person name="Chan A.P."/>
            <person name="Thibaud-Nissen F."/>
            <person name="Schobel S."/>
            <person name="Town C.D."/>
        </authorList>
    </citation>
    <scope>GENOME REANNOTATION</scope>
    <source>
        <strain>cv. Columbia</strain>
    </source>
</reference>
<reference key="4">
    <citation type="journal article" date="2003" name="Science">
        <title>Empirical analysis of transcriptional activity in the Arabidopsis genome.</title>
        <authorList>
            <person name="Yamada K."/>
            <person name="Lim J."/>
            <person name="Dale J.M."/>
            <person name="Chen H."/>
            <person name="Shinn P."/>
            <person name="Palm C.J."/>
            <person name="Southwick A.M."/>
            <person name="Wu H.C."/>
            <person name="Kim C.J."/>
            <person name="Nguyen M."/>
            <person name="Pham P.K."/>
            <person name="Cheuk R.F."/>
            <person name="Karlin-Newmann G."/>
            <person name="Liu S.X."/>
            <person name="Lam B."/>
            <person name="Sakano H."/>
            <person name="Wu T."/>
            <person name="Yu G."/>
            <person name="Miranda M."/>
            <person name="Quach H.L."/>
            <person name="Tripp M."/>
            <person name="Chang C.H."/>
            <person name="Lee J.M."/>
            <person name="Toriumi M.J."/>
            <person name="Chan M.M."/>
            <person name="Tang C.C."/>
            <person name="Onodera C.S."/>
            <person name="Deng J.M."/>
            <person name="Akiyama K."/>
            <person name="Ansari Y."/>
            <person name="Arakawa T."/>
            <person name="Banh J."/>
            <person name="Banno F."/>
            <person name="Bowser L."/>
            <person name="Brooks S.Y."/>
            <person name="Carninci P."/>
            <person name="Chao Q."/>
            <person name="Choy N."/>
            <person name="Enju A."/>
            <person name="Goldsmith A.D."/>
            <person name="Gurjal M."/>
            <person name="Hansen N.F."/>
            <person name="Hayashizaki Y."/>
            <person name="Johnson-Hopson C."/>
            <person name="Hsuan V.W."/>
            <person name="Iida K."/>
            <person name="Karnes M."/>
            <person name="Khan S."/>
            <person name="Koesema E."/>
            <person name="Ishida J."/>
            <person name="Jiang P.X."/>
            <person name="Jones T."/>
            <person name="Kawai J."/>
            <person name="Kamiya A."/>
            <person name="Meyers C."/>
            <person name="Nakajima M."/>
            <person name="Narusaka M."/>
            <person name="Seki M."/>
            <person name="Sakurai T."/>
            <person name="Satou M."/>
            <person name="Tamse R."/>
            <person name="Vaysberg M."/>
            <person name="Wallender E.K."/>
            <person name="Wong C."/>
            <person name="Yamamura Y."/>
            <person name="Yuan S."/>
            <person name="Shinozaki K."/>
            <person name="Davis R.W."/>
            <person name="Theologis A."/>
            <person name="Ecker J.R."/>
        </authorList>
    </citation>
    <scope>NUCLEOTIDE SEQUENCE [LARGE SCALE MRNA]</scope>
    <source>
        <strain>cv. Columbia</strain>
    </source>
</reference>
<reference key="5">
    <citation type="submission" date="2006-07" db="EMBL/GenBank/DDBJ databases">
        <title>Large-scale analysis of RIKEN Arabidopsis full-length (RAFL) cDNAs.</title>
        <authorList>
            <person name="Totoki Y."/>
            <person name="Seki M."/>
            <person name="Ishida J."/>
            <person name="Nakajima M."/>
            <person name="Enju A."/>
            <person name="Kamiya A."/>
            <person name="Narusaka M."/>
            <person name="Shin-i T."/>
            <person name="Nakagawa M."/>
            <person name="Sakamoto N."/>
            <person name="Oishi K."/>
            <person name="Kohara Y."/>
            <person name="Kobayashi M."/>
            <person name="Toyoda A."/>
            <person name="Sakaki Y."/>
            <person name="Sakurai T."/>
            <person name="Iida K."/>
            <person name="Akiyama K."/>
            <person name="Satou M."/>
            <person name="Toyoda T."/>
            <person name="Konagaya A."/>
            <person name="Carninci P."/>
            <person name="Kawai J."/>
            <person name="Hayashizaki Y."/>
            <person name="Shinozaki K."/>
        </authorList>
    </citation>
    <scope>NUCLEOTIDE SEQUENCE [LARGE SCALE MRNA]</scope>
    <source>
        <strain>cv. Columbia</strain>
    </source>
</reference>
<reference key="6">
    <citation type="submission" date="2002-03" db="EMBL/GenBank/DDBJ databases">
        <title>Full-length cDNA from Arabidopsis thaliana.</title>
        <authorList>
            <person name="Brover V.V."/>
            <person name="Troukhan M.E."/>
            <person name="Alexandrov N.A."/>
            <person name="Lu Y.-P."/>
            <person name="Flavell R.B."/>
            <person name="Feldmann K.A."/>
        </authorList>
    </citation>
    <scope>NUCLEOTIDE SEQUENCE [LARGE SCALE MRNA]</scope>
</reference>
<reference key="7">
    <citation type="journal article" date="2005" name="Plant Physiol.">
        <title>Genome organization of more than 300 defensin-like genes in Arabidopsis.</title>
        <authorList>
            <person name="Silverstein K.A.T."/>
            <person name="Graham M.A."/>
            <person name="Paape T.D."/>
            <person name="VandenBosch K.A."/>
        </authorList>
    </citation>
    <scope>GENE FAMILY</scope>
</reference>
<feature type="signal peptide" evidence="2">
    <location>
        <begin position="1"/>
        <end position="28"/>
    </location>
</feature>
<feature type="chain" id="PRO_0000379690" description="Defensin-like protein 196">
    <location>
        <begin position="29"/>
        <end position="97"/>
    </location>
</feature>
<feature type="site" description="Reactive bond" evidence="1">
    <location>
        <begin position="49"/>
        <end position="50"/>
    </location>
</feature>
<feature type="disulfide bond" evidence="1">
    <location>
        <begin position="33"/>
        <end position="85"/>
    </location>
</feature>
<feature type="disulfide bond" evidence="1">
    <location>
        <begin position="46"/>
        <end position="70"/>
    </location>
</feature>
<feature type="disulfide bond" evidence="1">
    <location>
        <begin position="55"/>
        <end position="80"/>
    </location>
</feature>
<feature type="disulfide bond" evidence="1">
    <location>
        <begin position="59"/>
        <end position="82"/>
    </location>
</feature>
<feature type="sequence variant" description="In strain: cv. Cvi-1, cv. Fe-1a, cv. Nd-1 and cv. Wei-0.">
    <original>K</original>
    <variation>T</variation>
    <location>
        <position position="3"/>
    </location>
</feature>
<feature type="sequence variant" description="In strain: cv. Cvi-1, cv. Fe-1a, cv. Nd-1 and cv. Wei-0.">
    <original>A</original>
    <variation>V</variation>
    <location>
        <position position="6"/>
    </location>
</feature>
<feature type="sequence variant" description="In strain: cv. Cvi-1, cv. Fe-1a, cv. Nd-1 and cv. Wei-0.">
    <original>I</original>
    <variation>T</variation>
    <location>
        <position position="14"/>
    </location>
</feature>
<feature type="sequence variant" description="In strain: cv. Cvi-1, cv. Fe-1a, cv. Nd-1 and cv. Wei-0.">
    <original>K</original>
    <variation>N</variation>
    <location>
        <position position="77"/>
    </location>
</feature>
<feature type="sequence variant" description="In strain: cv. Cvi-1, cv. Fe-1a, cv. Nd-1 and cv. Wei-0.">
    <original>N</original>
    <variation>K</variation>
    <location>
        <position position="87"/>
    </location>
</feature>
<keyword id="KW-0929">Antimicrobial</keyword>
<keyword id="KW-1015">Disulfide bond</keyword>
<keyword id="KW-0295">Fungicide</keyword>
<keyword id="KW-0611">Plant defense</keyword>
<keyword id="KW-1185">Reference proteome</keyword>
<keyword id="KW-0964">Secreted</keyword>
<keyword id="KW-0732">Signal</keyword>
<gene>
    <name type="primary">ATTI4</name>
    <name type="ordered locus">At2g43535</name>
    <name type="ORF">T1O24.45</name>
</gene>
<comment type="subcellular location">
    <subcellularLocation>
        <location evidence="1">Secreted</location>
    </subcellularLocation>
</comment>
<comment type="similarity">
    <text evidence="3">Belongs to the DEFL family. Protease inhibitor I18 (RTI/MTI-2) subfamily.</text>
</comment>
<comment type="caution">
    <text evidence="4">Was initially thought to be a protease inhibitor.</text>
</comment>
<accession>Q8RYE7</accession>
<accession>Q6ZZS3</accession>
<proteinExistence type="inferred from homology"/>
<protein>
    <recommendedName>
        <fullName>Defensin-like protein 196</fullName>
    </recommendedName>
    <alternativeName>
        <fullName>Trypsin inhibitor ATTI-4</fullName>
    </alternativeName>
</protein>
<evidence type="ECO:0000250" key="1"/>
<evidence type="ECO:0000255" key="2"/>
<evidence type="ECO:0000305" key="3"/>
<evidence type="ECO:0000305" key="4">
    <source>
    </source>
</evidence>
<organism>
    <name type="scientific">Arabidopsis thaliana</name>
    <name type="common">Mouse-ear cress</name>
    <dbReference type="NCBI Taxonomy" id="3702"/>
    <lineage>
        <taxon>Eukaryota</taxon>
        <taxon>Viridiplantae</taxon>
        <taxon>Streptophyta</taxon>
        <taxon>Embryophyta</taxon>
        <taxon>Tracheophyta</taxon>
        <taxon>Spermatophyta</taxon>
        <taxon>Magnoliopsida</taxon>
        <taxon>eudicotyledons</taxon>
        <taxon>Gunneridae</taxon>
        <taxon>Pentapetalae</taxon>
        <taxon>rosids</taxon>
        <taxon>malvids</taxon>
        <taxon>Brassicales</taxon>
        <taxon>Brassicaceae</taxon>
        <taxon>Camelineae</taxon>
        <taxon>Arabidopsis</taxon>
    </lineage>
</organism>